<proteinExistence type="inferred from homology"/>
<dbReference type="EMBL" id="CU928158">
    <property type="protein sequence ID" value="CAQ89390.1"/>
    <property type="molecule type" value="Genomic_DNA"/>
</dbReference>
<dbReference type="RefSeq" id="WP_015953466.1">
    <property type="nucleotide sequence ID" value="NC_011740.1"/>
</dbReference>
<dbReference type="SMR" id="B7LT86"/>
<dbReference type="GeneID" id="75057087"/>
<dbReference type="KEGG" id="efe:EFER_1879"/>
<dbReference type="HOGENOM" id="CLU_023403_2_0_6"/>
<dbReference type="OrthoDB" id="335750at2"/>
<dbReference type="UniPathway" id="UPA00637"/>
<dbReference type="Proteomes" id="UP000000745">
    <property type="component" value="Chromosome"/>
</dbReference>
<dbReference type="GO" id="GO:0030288">
    <property type="term" value="C:outer membrane-bounded periplasmic space"/>
    <property type="evidence" value="ECO:0007669"/>
    <property type="project" value="TreeGrafter"/>
</dbReference>
<dbReference type="GO" id="GO:0030246">
    <property type="term" value="F:carbohydrate binding"/>
    <property type="evidence" value="ECO:0007669"/>
    <property type="project" value="InterPro"/>
</dbReference>
<dbReference type="GO" id="GO:0003824">
    <property type="term" value="F:catalytic activity"/>
    <property type="evidence" value="ECO:0007669"/>
    <property type="project" value="InterPro"/>
</dbReference>
<dbReference type="GO" id="GO:0051274">
    <property type="term" value="P:beta-glucan biosynthetic process"/>
    <property type="evidence" value="ECO:0007669"/>
    <property type="project" value="TreeGrafter"/>
</dbReference>
<dbReference type="FunFam" id="2.60.40.10:FF:000294">
    <property type="entry name" value="Glucans biosynthesis protein G"/>
    <property type="match status" value="1"/>
</dbReference>
<dbReference type="FunFam" id="2.70.98.10:FF:000001">
    <property type="entry name" value="Glucans biosynthesis protein G"/>
    <property type="match status" value="1"/>
</dbReference>
<dbReference type="Gene3D" id="2.70.98.10">
    <property type="match status" value="1"/>
</dbReference>
<dbReference type="Gene3D" id="2.60.40.10">
    <property type="entry name" value="Immunoglobulins"/>
    <property type="match status" value="1"/>
</dbReference>
<dbReference type="HAMAP" id="MF_01069">
    <property type="entry name" value="MdoG_OpgG"/>
    <property type="match status" value="1"/>
</dbReference>
<dbReference type="InterPro" id="IPR011013">
    <property type="entry name" value="Gal_mutarotase_sf_dom"/>
</dbReference>
<dbReference type="InterPro" id="IPR014718">
    <property type="entry name" value="GH-type_carb-bd"/>
</dbReference>
<dbReference type="InterPro" id="IPR014438">
    <property type="entry name" value="Glucan_biosyn_MdoG/MdoD"/>
</dbReference>
<dbReference type="InterPro" id="IPR007444">
    <property type="entry name" value="Glucan_biosyn_MdoG_C"/>
</dbReference>
<dbReference type="InterPro" id="IPR013783">
    <property type="entry name" value="Ig-like_fold"/>
</dbReference>
<dbReference type="InterPro" id="IPR014756">
    <property type="entry name" value="Ig_E-set"/>
</dbReference>
<dbReference type="InterPro" id="IPR023704">
    <property type="entry name" value="MdoG_OpgG"/>
</dbReference>
<dbReference type="PANTHER" id="PTHR30504">
    <property type="entry name" value="GLUCANS BIOSYNTHESIS PROTEIN"/>
    <property type="match status" value="1"/>
</dbReference>
<dbReference type="PANTHER" id="PTHR30504:SF4">
    <property type="entry name" value="GLUCANS BIOSYNTHESIS PROTEIN G"/>
    <property type="match status" value="1"/>
</dbReference>
<dbReference type="Pfam" id="PF04349">
    <property type="entry name" value="MdoG"/>
    <property type="match status" value="1"/>
</dbReference>
<dbReference type="PIRSF" id="PIRSF006281">
    <property type="entry name" value="MdoG"/>
    <property type="match status" value="1"/>
</dbReference>
<dbReference type="SUPFAM" id="SSF81296">
    <property type="entry name" value="E set domains"/>
    <property type="match status" value="1"/>
</dbReference>
<dbReference type="SUPFAM" id="SSF74650">
    <property type="entry name" value="Galactose mutarotase-like"/>
    <property type="match status" value="1"/>
</dbReference>
<keyword id="KW-0574">Periplasm</keyword>
<keyword id="KW-0732">Signal</keyword>
<feature type="signal peptide" evidence="1">
    <location>
        <begin position="1"/>
        <end position="22"/>
    </location>
</feature>
<feature type="chain" id="PRO_1000136615" description="Glucans biosynthesis protein G">
    <location>
        <begin position="23"/>
        <end position="511"/>
    </location>
</feature>
<accession>B7LT86</accession>
<reference key="1">
    <citation type="journal article" date="2009" name="PLoS Genet.">
        <title>Organised genome dynamics in the Escherichia coli species results in highly diverse adaptive paths.</title>
        <authorList>
            <person name="Touchon M."/>
            <person name="Hoede C."/>
            <person name="Tenaillon O."/>
            <person name="Barbe V."/>
            <person name="Baeriswyl S."/>
            <person name="Bidet P."/>
            <person name="Bingen E."/>
            <person name="Bonacorsi S."/>
            <person name="Bouchier C."/>
            <person name="Bouvet O."/>
            <person name="Calteau A."/>
            <person name="Chiapello H."/>
            <person name="Clermont O."/>
            <person name="Cruveiller S."/>
            <person name="Danchin A."/>
            <person name="Diard M."/>
            <person name="Dossat C."/>
            <person name="Karoui M.E."/>
            <person name="Frapy E."/>
            <person name="Garry L."/>
            <person name="Ghigo J.M."/>
            <person name="Gilles A.M."/>
            <person name="Johnson J."/>
            <person name="Le Bouguenec C."/>
            <person name="Lescat M."/>
            <person name="Mangenot S."/>
            <person name="Martinez-Jehanne V."/>
            <person name="Matic I."/>
            <person name="Nassif X."/>
            <person name="Oztas S."/>
            <person name="Petit M.A."/>
            <person name="Pichon C."/>
            <person name="Rouy Z."/>
            <person name="Ruf C.S."/>
            <person name="Schneider D."/>
            <person name="Tourret J."/>
            <person name="Vacherie B."/>
            <person name="Vallenet D."/>
            <person name="Medigue C."/>
            <person name="Rocha E.P.C."/>
            <person name="Denamur E."/>
        </authorList>
    </citation>
    <scope>NUCLEOTIDE SEQUENCE [LARGE SCALE GENOMIC DNA]</scope>
    <source>
        <strain>ATCC 35469 / DSM 13698 / BCRC 15582 / CCUG 18766 / IAM 14443 / JCM 21226 / LMG 7866 / NBRC 102419 / NCTC 12128 / CDC 0568-73</strain>
    </source>
</reference>
<organism>
    <name type="scientific">Escherichia fergusonii (strain ATCC 35469 / DSM 13698 / CCUG 18766 / IAM 14443 / JCM 21226 / LMG 7866 / NBRC 102419 / NCTC 12128 / CDC 0568-73)</name>
    <dbReference type="NCBI Taxonomy" id="585054"/>
    <lineage>
        <taxon>Bacteria</taxon>
        <taxon>Pseudomonadati</taxon>
        <taxon>Pseudomonadota</taxon>
        <taxon>Gammaproteobacteria</taxon>
        <taxon>Enterobacterales</taxon>
        <taxon>Enterobacteriaceae</taxon>
        <taxon>Escherichia</taxon>
    </lineage>
</organism>
<evidence type="ECO:0000255" key="1">
    <source>
        <dbReference type="HAMAP-Rule" id="MF_01069"/>
    </source>
</evidence>
<name>OPGG_ESCF3</name>
<gene>
    <name evidence="1" type="primary">mdoG</name>
    <name evidence="1" type="synonym">opgG</name>
    <name type="ordered locus">EFER_1879</name>
</gene>
<sequence>MMKMRWLSAAVMLTLYTSSSWAFSIDDVAKQAQSLAGKGYEAPKSNLPSVFRDMKYADYQQIQFNSDKAYWSNLKTPFKLEFYHQGMYFDTPVKINEVTATTVKRIKYSPDYFNFGDVKHDKDTVKDLGFAGFKVLYPINSKDKNDEILSMLGASYFRVIGAGQVYGLSARGLAIDTALPSGEEFPRFREFWIERPKPTDKRLTIYALLDSPRATGAYRFVVMPGRDTVVDVQSKVYLRDKVGKLGVAPLTSMFLFGPNQPSPATNYRPELHDSNGLSIHAGNGEWIWRPLNNPKHLAISSYAMENPQGFGLLQRGRDFSRFEDLDDRYDLRPSAWVTPKGEWGKGKVELVEIPTNDETNDNIVAYWTPDQLPEPGKEMNFKYTITFSRDEDKLHAPDNAWVQQTRRSTGDVKQSNLIRQPDGTIAFVVDFTGTEMKKLPQDTPVTAQTSIGDNGEIVESSVRYNPAIKGWRLTMRVKVKDAKKPTEMRAALATADKTLSETWSYQLPANE</sequence>
<comment type="function">
    <text evidence="1">Involved in the biosynthesis of osmoregulated periplasmic glucans (OPGs).</text>
</comment>
<comment type="pathway">
    <text evidence="1">Glycan metabolism; osmoregulated periplasmic glucan (OPG) biosynthesis.</text>
</comment>
<comment type="subcellular location">
    <subcellularLocation>
        <location evidence="1">Periplasm</location>
    </subcellularLocation>
</comment>
<comment type="similarity">
    <text evidence="1">Belongs to the OpgD/OpgG family.</text>
</comment>
<protein>
    <recommendedName>
        <fullName evidence="1">Glucans biosynthesis protein G</fullName>
    </recommendedName>
</protein>